<sequence length="434" mass="47096">MAMQKIFAREILDSRGNPTVEVDLHTAKGRFRAAVPSGASTGIYEALELRDGDKSRYLGKGVLKAVEHINKTLGPALLEKKLSVVDQEKVDKFMIELDGTENKSKFGANAILGVSLAVCKAGAAEKGVPLYRHIADLAGNPELILPVPAFNVINGGSHAGNKLAMQEFMILPVGASSFREAMRIGAEVYHHLKGVIKAKYGKDATNVGDEGGFAPNILENNEALELLKTAIQAAGYPDKVVIGMDVAASEFYRNGKYDLDFKSPDDPARHISGEKLGELYKNFIKNYPVVSIEDPFDQDDWATWTSFLSGVNIQIVGDDLTVTNPKRIAQAVEKKACNCLLLKVNQIGSVTESIQACKLAQSNGWGVMVSHRSGETEDTFIADLVVGLCTGQIKTGAPCRSERLAKYNQLMRIEEALGDKAVFAGRKFRNPKAK</sequence>
<gene>
    <name type="primary">ENO3</name>
</gene>
<accession>Q3ZC09</accession>
<proteinExistence type="evidence at transcript level"/>
<evidence type="ECO:0000250" key="1"/>
<evidence type="ECO:0000250" key="2">
    <source>
        <dbReference type="UniProtKB" id="P13929"/>
    </source>
</evidence>
<evidence type="ECO:0000250" key="3">
    <source>
        <dbReference type="UniProtKB" id="P15429"/>
    </source>
</evidence>
<evidence type="ECO:0000305" key="4"/>
<keyword id="KW-0007">Acetylation</keyword>
<keyword id="KW-0963">Cytoplasm</keyword>
<keyword id="KW-0324">Glycolysis</keyword>
<keyword id="KW-0456">Lyase</keyword>
<keyword id="KW-0460">Magnesium</keyword>
<keyword id="KW-0479">Metal-binding</keyword>
<keyword id="KW-0597">Phosphoprotein</keyword>
<keyword id="KW-1185">Reference proteome</keyword>
<protein>
    <recommendedName>
        <fullName>Beta-enolase</fullName>
        <ecNumber evidence="3">4.2.1.11</ecNumber>
    </recommendedName>
    <alternativeName>
        <fullName>2-phospho-D-glycerate hydro-lyase</fullName>
    </alternativeName>
    <alternativeName>
        <fullName>Enolase 3</fullName>
    </alternativeName>
    <alternativeName>
        <fullName>Muscle-specific enolase</fullName>
        <shortName>MSE</shortName>
    </alternativeName>
    <alternativeName>
        <fullName>Skeletal muscle enolase</fullName>
    </alternativeName>
</protein>
<name>ENOB_BOVIN</name>
<organism>
    <name type="scientific">Bos taurus</name>
    <name type="common">Bovine</name>
    <dbReference type="NCBI Taxonomy" id="9913"/>
    <lineage>
        <taxon>Eukaryota</taxon>
        <taxon>Metazoa</taxon>
        <taxon>Chordata</taxon>
        <taxon>Craniata</taxon>
        <taxon>Vertebrata</taxon>
        <taxon>Euteleostomi</taxon>
        <taxon>Mammalia</taxon>
        <taxon>Eutheria</taxon>
        <taxon>Laurasiatheria</taxon>
        <taxon>Artiodactyla</taxon>
        <taxon>Ruminantia</taxon>
        <taxon>Pecora</taxon>
        <taxon>Bovidae</taxon>
        <taxon>Bovinae</taxon>
        <taxon>Bos</taxon>
    </lineage>
</organism>
<dbReference type="EC" id="4.2.1.11" evidence="3"/>
<dbReference type="EMBL" id="BC102988">
    <property type="protein sequence ID" value="AAI02989.1"/>
    <property type="molecule type" value="mRNA"/>
</dbReference>
<dbReference type="RefSeq" id="NP_001029874.1">
    <property type="nucleotide sequence ID" value="NM_001034702.1"/>
</dbReference>
<dbReference type="SMR" id="Q3ZC09"/>
<dbReference type="FunCoup" id="Q3ZC09">
    <property type="interactions" value="1270"/>
</dbReference>
<dbReference type="STRING" id="9913.ENSBTAP00000063298"/>
<dbReference type="Allergome" id="11909">
    <property type="allergen name" value="Bos d Enolase"/>
</dbReference>
<dbReference type="PaxDb" id="9913-ENSBTAP00000007278"/>
<dbReference type="PeptideAtlas" id="Q3ZC09"/>
<dbReference type="GeneID" id="540303"/>
<dbReference type="KEGG" id="bta:540303"/>
<dbReference type="CTD" id="2027"/>
<dbReference type="VEuPathDB" id="HostDB:ENSBTAG00000005534"/>
<dbReference type="eggNOG" id="KOG2670">
    <property type="taxonomic scope" value="Eukaryota"/>
</dbReference>
<dbReference type="HOGENOM" id="CLU_031223_0_0_1"/>
<dbReference type="InParanoid" id="Q3ZC09"/>
<dbReference type="OMA" id="GMSITKI"/>
<dbReference type="OrthoDB" id="1739814at2759"/>
<dbReference type="TreeFam" id="TF300391"/>
<dbReference type="Reactome" id="R-BTA-70171">
    <property type="pathway name" value="Glycolysis"/>
</dbReference>
<dbReference type="Reactome" id="R-BTA-70263">
    <property type="pathway name" value="Gluconeogenesis"/>
</dbReference>
<dbReference type="SABIO-RK" id="Q3ZC09"/>
<dbReference type="UniPathway" id="UPA00109">
    <property type="reaction ID" value="UER00187"/>
</dbReference>
<dbReference type="Proteomes" id="UP000009136">
    <property type="component" value="Chromosome 19"/>
</dbReference>
<dbReference type="Bgee" id="ENSBTAG00000005534">
    <property type="expression patterns" value="Expressed in biceps femoris and 106 other cell types or tissues"/>
</dbReference>
<dbReference type="GO" id="GO:0000015">
    <property type="term" value="C:phosphopyruvate hydratase complex"/>
    <property type="evidence" value="ECO:0000318"/>
    <property type="project" value="GO_Central"/>
</dbReference>
<dbReference type="GO" id="GO:0000287">
    <property type="term" value="F:magnesium ion binding"/>
    <property type="evidence" value="ECO:0007669"/>
    <property type="project" value="InterPro"/>
</dbReference>
<dbReference type="GO" id="GO:0004634">
    <property type="term" value="F:phosphopyruvate hydratase activity"/>
    <property type="evidence" value="ECO:0000318"/>
    <property type="project" value="GO_Central"/>
</dbReference>
<dbReference type="GO" id="GO:0006096">
    <property type="term" value="P:glycolytic process"/>
    <property type="evidence" value="ECO:0000318"/>
    <property type="project" value="GO_Central"/>
</dbReference>
<dbReference type="CDD" id="cd03313">
    <property type="entry name" value="enolase"/>
    <property type="match status" value="1"/>
</dbReference>
<dbReference type="FunFam" id="3.30.390.10:FF:000001">
    <property type="entry name" value="Enolase"/>
    <property type="match status" value="1"/>
</dbReference>
<dbReference type="FunFam" id="3.20.20.120:FF:000002">
    <property type="entry name" value="Enolase 1"/>
    <property type="match status" value="1"/>
</dbReference>
<dbReference type="Gene3D" id="3.20.20.120">
    <property type="entry name" value="Enolase-like C-terminal domain"/>
    <property type="match status" value="1"/>
</dbReference>
<dbReference type="Gene3D" id="3.30.390.10">
    <property type="entry name" value="Enolase-like, N-terminal domain"/>
    <property type="match status" value="1"/>
</dbReference>
<dbReference type="HAMAP" id="MF_00318">
    <property type="entry name" value="Enolase"/>
    <property type="match status" value="1"/>
</dbReference>
<dbReference type="InterPro" id="IPR000941">
    <property type="entry name" value="Enolase"/>
</dbReference>
<dbReference type="InterPro" id="IPR036849">
    <property type="entry name" value="Enolase-like_C_sf"/>
</dbReference>
<dbReference type="InterPro" id="IPR029017">
    <property type="entry name" value="Enolase-like_N"/>
</dbReference>
<dbReference type="InterPro" id="IPR020810">
    <property type="entry name" value="Enolase_C"/>
</dbReference>
<dbReference type="InterPro" id="IPR020809">
    <property type="entry name" value="Enolase_CS"/>
</dbReference>
<dbReference type="InterPro" id="IPR020811">
    <property type="entry name" value="Enolase_N"/>
</dbReference>
<dbReference type="NCBIfam" id="TIGR01060">
    <property type="entry name" value="eno"/>
    <property type="match status" value="1"/>
</dbReference>
<dbReference type="PANTHER" id="PTHR11902:SF5">
    <property type="entry name" value="BETA-ENOLASE"/>
    <property type="match status" value="1"/>
</dbReference>
<dbReference type="PANTHER" id="PTHR11902">
    <property type="entry name" value="ENOLASE"/>
    <property type="match status" value="1"/>
</dbReference>
<dbReference type="Pfam" id="PF00113">
    <property type="entry name" value="Enolase_C"/>
    <property type="match status" value="1"/>
</dbReference>
<dbReference type="Pfam" id="PF03952">
    <property type="entry name" value="Enolase_N"/>
    <property type="match status" value="1"/>
</dbReference>
<dbReference type="PIRSF" id="PIRSF001400">
    <property type="entry name" value="Enolase"/>
    <property type="match status" value="1"/>
</dbReference>
<dbReference type="PRINTS" id="PR00148">
    <property type="entry name" value="ENOLASE"/>
</dbReference>
<dbReference type="SFLD" id="SFLDS00001">
    <property type="entry name" value="Enolase"/>
    <property type="match status" value="1"/>
</dbReference>
<dbReference type="SFLD" id="SFLDF00002">
    <property type="entry name" value="enolase"/>
    <property type="match status" value="1"/>
</dbReference>
<dbReference type="SMART" id="SM01192">
    <property type="entry name" value="Enolase_C"/>
    <property type="match status" value="1"/>
</dbReference>
<dbReference type="SMART" id="SM01193">
    <property type="entry name" value="Enolase_N"/>
    <property type="match status" value="1"/>
</dbReference>
<dbReference type="SUPFAM" id="SSF51604">
    <property type="entry name" value="Enolase C-terminal domain-like"/>
    <property type="match status" value="1"/>
</dbReference>
<dbReference type="SUPFAM" id="SSF54826">
    <property type="entry name" value="Enolase N-terminal domain-like"/>
    <property type="match status" value="1"/>
</dbReference>
<dbReference type="PROSITE" id="PS00164">
    <property type="entry name" value="ENOLASE"/>
    <property type="match status" value="1"/>
</dbReference>
<reference key="1">
    <citation type="submission" date="2005-08" db="EMBL/GenBank/DDBJ databases">
        <authorList>
            <consortium name="NIH - Mammalian Gene Collection (MGC) project"/>
        </authorList>
    </citation>
    <scope>NUCLEOTIDE SEQUENCE [LARGE SCALE MRNA]</scope>
    <source>
        <strain>Hereford</strain>
        <tissue>Heart ventricle</tissue>
    </source>
</reference>
<comment type="function">
    <text evidence="3">Glycolytic enzyme that catalyzes the conversion of 2-phosphoglycerate to phosphoenolpyruvate. Appears to have a function in striated muscle development and regeneration.</text>
</comment>
<comment type="catalytic activity">
    <reaction evidence="3">
        <text>(2R)-2-phosphoglycerate = phosphoenolpyruvate + H2O</text>
        <dbReference type="Rhea" id="RHEA:10164"/>
        <dbReference type="ChEBI" id="CHEBI:15377"/>
        <dbReference type="ChEBI" id="CHEBI:58289"/>
        <dbReference type="ChEBI" id="CHEBI:58702"/>
        <dbReference type="EC" id="4.2.1.11"/>
    </reaction>
    <physiologicalReaction direction="left-to-right" evidence="3">
        <dbReference type="Rhea" id="RHEA:10165"/>
    </physiologicalReaction>
</comment>
<comment type="cofactor">
    <cofactor evidence="1">
        <name>Mg(2+)</name>
        <dbReference type="ChEBI" id="CHEBI:18420"/>
    </cofactor>
    <text evidence="1">Mg(2+) is required for catalysis and for stabilizing the dimer.</text>
</comment>
<comment type="pathway">
    <text evidence="3">Carbohydrate degradation; glycolysis; pyruvate from D-glyceraldehyde 3-phosphate: step 4/5.</text>
</comment>
<comment type="subunit">
    <text evidence="1">Mammalian enolase is composed of 3 isozyme subunits, alpha, beta and gamma, which can form homodimers or heterodimers which are cell-type and development-specific. Interacts with PNKD (By similarity).</text>
</comment>
<comment type="subcellular location">
    <subcellularLocation>
        <location>Cytoplasm</location>
    </subcellularLocation>
    <text evidence="1">Localized to the Z line. Some colocalization with CKM at M-band (By similarity).</text>
</comment>
<comment type="similarity">
    <text evidence="4">Belongs to the enolase family.</text>
</comment>
<feature type="initiator methionine" description="Removed" evidence="2">
    <location>
        <position position="1"/>
    </location>
</feature>
<feature type="chain" id="PRO_0000273971" description="Beta-enolase">
    <location>
        <begin position="2"/>
        <end position="434"/>
    </location>
</feature>
<feature type="active site" description="Proton donor" evidence="1">
    <location>
        <position position="210"/>
    </location>
</feature>
<feature type="active site" description="Proton acceptor" evidence="1">
    <location>
        <position position="343"/>
    </location>
</feature>
<feature type="binding site" evidence="1">
    <location>
        <position position="158"/>
    </location>
    <ligand>
        <name>substrate</name>
    </ligand>
</feature>
<feature type="binding site" evidence="1">
    <location>
        <position position="167"/>
    </location>
    <ligand>
        <name>substrate</name>
    </ligand>
</feature>
<feature type="binding site" evidence="1">
    <location>
        <position position="245"/>
    </location>
    <ligand>
        <name>Mg(2+)</name>
        <dbReference type="ChEBI" id="CHEBI:18420"/>
    </ligand>
</feature>
<feature type="binding site" evidence="1">
    <location>
        <position position="293"/>
    </location>
    <ligand>
        <name>Mg(2+)</name>
        <dbReference type="ChEBI" id="CHEBI:18420"/>
    </ligand>
</feature>
<feature type="binding site" evidence="1">
    <location>
        <position position="293"/>
    </location>
    <ligand>
        <name>substrate</name>
    </ligand>
</feature>
<feature type="binding site" evidence="1">
    <location>
        <position position="318"/>
    </location>
    <ligand>
        <name>Mg(2+)</name>
        <dbReference type="ChEBI" id="CHEBI:18420"/>
    </ligand>
</feature>
<feature type="binding site" evidence="1">
    <location>
        <position position="318"/>
    </location>
    <ligand>
        <name>substrate</name>
    </ligand>
</feature>
<feature type="binding site" evidence="1">
    <location>
        <begin position="370"/>
        <end position="373"/>
    </location>
    <ligand>
        <name>substrate</name>
    </ligand>
</feature>
<feature type="binding site" evidence="1">
    <location>
        <position position="394"/>
    </location>
    <ligand>
        <name>substrate</name>
    </ligand>
</feature>
<feature type="modified residue" description="N-acetylalanine" evidence="2">
    <location>
        <position position="2"/>
    </location>
</feature>
<feature type="modified residue" description="Phosphothreonine" evidence="3">
    <location>
        <position position="72"/>
    </location>
</feature>
<feature type="modified residue" description="Phosphoserine" evidence="3">
    <location>
        <position position="83"/>
    </location>
</feature>
<feature type="modified residue" description="Phosphoserine" evidence="3">
    <location>
        <position position="157"/>
    </location>
</feature>
<feature type="modified residue" description="Phosphoserine" evidence="2">
    <location>
        <position position="176"/>
    </location>
</feature>
<feature type="modified residue" description="Phosphothreonine" evidence="3">
    <location>
        <position position="205"/>
    </location>
</feature>
<feature type="modified residue" description="Phosphothreonine" evidence="3">
    <location>
        <position position="229"/>
    </location>
</feature>
<feature type="modified residue" description="Phosphotyrosine" evidence="3">
    <location>
        <position position="236"/>
    </location>
</feature>
<feature type="modified residue" description="Phosphoserine" evidence="2">
    <location>
        <position position="263"/>
    </location>
</feature>